<reference key="1">
    <citation type="journal article" date="1997" name="J. Biol. Chem.">
        <title>The proton-translocating NADH-quinone oxidoreductase (NDH-1) of thermophilic bacterium Thermus thermophilus HB-8. Complete DNA sequence of the gene cluster and thermostable properties of the expressed NQO2 subunit.</title>
        <authorList>
            <person name="Yano T."/>
            <person name="Chu S.S."/>
            <person name="Sled' V.D."/>
            <person name="Ohnishi T."/>
            <person name="Yagi T."/>
        </authorList>
    </citation>
    <scope>NUCLEOTIDE SEQUENCE [GENOMIC DNA]</scope>
    <source>
        <strain>ATCC 27634 / DSM 579 / HB8</strain>
    </source>
</reference>
<reference key="2">
    <citation type="submission" date="2004-11" db="EMBL/GenBank/DDBJ databases">
        <title>Complete genome sequence of Thermus thermophilus HB8.</title>
        <authorList>
            <person name="Masui R."/>
            <person name="Kurokawa K."/>
            <person name="Nakagawa N."/>
            <person name="Tokunaga F."/>
            <person name="Koyama Y."/>
            <person name="Shibata T."/>
            <person name="Oshima T."/>
            <person name="Yokoyama S."/>
            <person name="Yasunaga T."/>
            <person name="Kuramitsu S."/>
        </authorList>
    </citation>
    <scope>NUCLEOTIDE SEQUENCE [LARGE SCALE GENOMIC DNA]</scope>
    <source>
        <strain>ATCC 27634 / DSM 579 / HB8</strain>
    </source>
</reference>
<gene>
    <name type="primary">nqo14</name>
    <name type="ordered locus">TTHA0097</name>
</gene>
<keyword id="KW-0002">3D-structure</keyword>
<keyword id="KW-0997">Cell inner membrane</keyword>
<keyword id="KW-1003">Cell membrane</keyword>
<keyword id="KW-0472">Membrane</keyword>
<keyword id="KW-0520">NAD</keyword>
<keyword id="KW-0874">Quinone</keyword>
<keyword id="KW-1185">Reference proteome</keyword>
<keyword id="KW-1278">Translocase</keyword>
<keyword id="KW-0812">Transmembrane</keyword>
<keyword id="KW-1133">Transmembrane helix</keyword>
<keyword id="KW-0813">Transport</keyword>
<accession>Q56229</accession>
<accession>Q5SM46</accession>
<proteinExistence type="evidence at protein level"/>
<organism>
    <name type="scientific">Thermus thermophilus (strain ATCC 27634 / DSM 579 / HB8)</name>
    <dbReference type="NCBI Taxonomy" id="300852"/>
    <lineage>
        <taxon>Bacteria</taxon>
        <taxon>Thermotogati</taxon>
        <taxon>Deinococcota</taxon>
        <taxon>Deinococci</taxon>
        <taxon>Thermales</taxon>
        <taxon>Thermaceae</taxon>
        <taxon>Thermus</taxon>
    </lineage>
</organism>
<sequence length="427" mass="44436">MTLAILAVFSVALTLLGFVLPPQGVKRATLLGLALALASLLLTWGKPFAFGPYAVDGVSQVFTLLALLGALWTVGLVRSGRFEFYLLVLYAALGMHLLASTRHLLLMLVALEALSLPLYALATWRRGQGLEAALKYFLLGALAAAFFLYGAALFYGATGSLVLGAPGEGPLYALALGLLLVGLGFKAALAPFHFWTPDVYQGSPTPVVLFMATSVKAAAFAALLRVAAPPEALALLVALSVVVGNLAALAQKEAKRLLAYSSIAHAGYMALALYTGNAQALGFYLLTYVLATGLAFAVLSQISPDRVPLEALRGLYRKDPLLGLAFLVAMLSLLGLPPLAGFWGKYLAFAEAARAGAWGVLVLALVTSAVSAYYYLGLGLAVFARPEETPFRPGPPWARAAVVAAGVLLLALGLLPGLVLPALAAGG</sequence>
<name>NQO14_THET8</name>
<comment type="function">
    <text>NDH-1 shuttles electrons from NADH, via FMN and iron-sulfur (Fe-S) centers, to quinones in the respiratory chain. The immediate electron acceptor for the enzyme in this species is menaquinone. Couples the redox reaction to proton translocation (for every two electrons transferred, four hydrogen ions are translocated across the cytoplasmic membrane), and thus conserves the redox energy in a proton gradient required for the synthesis of ATP.</text>
</comment>
<comment type="catalytic activity">
    <reaction evidence="1">
        <text>a quinone + NADH + 5 H(+)(in) = a quinol + NAD(+) + 4 H(+)(out)</text>
        <dbReference type="Rhea" id="RHEA:57888"/>
        <dbReference type="ChEBI" id="CHEBI:15378"/>
        <dbReference type="ChEBI" id="CHEBI:24646"/>
        <dbReference type="ChEBI" id="CHEBI:57540"/>
        <dbReference type="ChEBI" id="CHEBI:57945"/>
        <dbReference type="ChEBI" id="CHEBI:132124"/>
    </reaction>
</comment>
<comment type="subunit">
    <text>NDH-1 is composed of 15 different subunits, Nqo1 to Nqo15. The complex has a L-shaped structure, with the hydrophobic arm (subunits Nqo7, Nqo8 and Nqo10 to Nqo14) embedded in the membrane and the hydrophilic peripheral arm (subunits Nqo1 to Nqo6, Nqo9 and Nqo15) protruding into the bacterial cytoplasm. The hydrophilic domain contains all the redox centers.</text>
</comment>
<comment type="subcellular location">
    <subcellularLocation>
        <location>Cell inner membrane</location>
        <topology>Multi-pass membrane protein</topology>
    </subcellularLocation>
</comment>
<comment type="similarity">
    <text evidence="1">Belongs to the complex I subunit 2 family.</text>
</comment>
<dbReference type="EC" id="7.1.1.-" evidence="1"/>
<dbReference type="EMBL" id="U52917">
    <property type="protein sequence ID" value="AAA97951.1"/>
    <property type="molecule type" value="Genomic_DNA"/>
</dbReference>
<dbReference type="EMBL" id="AP008226">
    <property type="protein sequence ID" value="BAD69920.1"/>
    <property type="molecule type" value="Genomic_DNA"/>
</dbReference>
<dbReference type="PIR" id="T11911">
    <property type="entry name" value="T11911"/>
</dbReference>
<dbReference type="RefSeq" id="WP_011227707.1">
    <property type="nucleotide sequence ID" value="NC_006461.1"/>
</dbReference>
<dbReference type="RefSeq" id="YP_143363.1">
    <property type="nucleotide sequence ID" value="NC_006461.1"/>
</dbReference>
<dbReference type="PDB" id="4HE8">
    <property type="method" value="X-ray"/>
    <property type="resolution" value="3.30 A"/>
    <property type="chains" value="I/N=1-427"/>
</dbReference>
<dbReference type="PDB" id="4HEA">
    <property type="method" value="X-ray"/>
    <property type="resolution" value="3.30 A"/>
    <property type="chains" value="N/V=1-427"/>
</dbReference>
<dbReference type="PDB" id="6I0D">
    <property type="method" value="X-ray"/>
    <property type="resolution" value="3.60 A"/>
    <property type="chains" value="N/V=1-427"/>
</dbReference>
<dbReference type="PDB" id="6I1P">
    <property type="method" value="X-ray"/>
    <property type="resolution" value="3.21 A"/>
    <property type="chains" value="N/V=1-427"/>
</dbReference>
<dbReference type="PDB" id="6Q8O">
    <property type="method" value="X-ray"/>
    <property type="resolution" value="3.60 A"/>
    <property type="chains" value="N/V=1-427"/>
</dbReference>
<dbReference type="PDB" id="6Q8W">
    <property type="method" value="X-ray"/>
    <property type="resolution" value="3.40 A"/>
    <property type="chains" value="N/V=1-427"/>
</dbReference>
<dbReference type="PDB" id="6Q8X">
    <property type="method" value="X-ray"/>
    <property type="resolution" value="3.51 A"/>
    <property type="chains" value="N/V=1-427"/>
</dbReference>
<dbReference type="PDB" id="6Y11">
    <property type="method" value="X-ray"/>
    <property type="resolution" value="3.11 A"/>
    <property type="chains" value="N/V=1-427"/>
</dbReference>
<dbReference type="PDB" id="6ZIY">
    <property type="method" value="EM"/>
    <property type="resolution" value="4.25 A"/>
    <property type="chains" value="N=1-427"/>
</dbReference>
<dbReference type="PDB" id="6ZJL">
    <property type="method" value="EM"/>
    <property type="resolution" value="4.30 A"/>
    <property type="chains" value="N=1-427"/>
</dbReference>
<dbReference type="PDB" id="6ZJN">
    <property type="method" value="EM"/>
    <property type="resolution" value="6.10 A"/>
    <property type="chains" value="N=1-427"/>
</dbReference>
<dbReference type="PDB" id="6ZJY">
    <property type="method" value="EM"/>
    <property type="resolution" value="5.50 A"/>
    <property type="chains" value="N=1-427"/>
</dbReference>
<dbReference type="PDBsum" id="4HE8"/>
<dbReference type="PDBsum" id="4HEA"/>
<dbReference type="PDBsum" id="6I0D"/>
<dbReference type="PDBsum" id="6I1P"/>
<dbReference type="PDBsum" id="6Q8O"/>
<dbReference type="PDBsum" id="6Q8W"/>
<dbReference type="PDBsum" id="6Q8X"/>
<dbReference type="PDBsum" id="6Y11"/>
<dbReference type="PDBsum" id="6ZIY"/>
<dbReference type="PDBsum" id="6ZJL"/>
<dbReference type="PDBsum" id="6ZJN"/>
<dbReference type="PDBsum" id="6ZJY"/>
<dbReference type="EMDB" id="EMD-11231"/>
<dbReference type="EMDB" id="EMD-11235"/>
<dbReference type="EMDB" id="EMD-11237"/>
<dbReference type="EMDB" id="EMD-11238"/>
<dbReference type="SMR" id="Q56229"/>
<dbReference type="DIP" id="DIP-59272N"/>
<dbReference type="IntAct" id="Q56229">
    <property type="interactions" value="1"/>
</dbReference>
<dbReference type="TCDB" id="3.D.1.3.1">
    <property type="family name" value="the h+ or na+-translocating nadh dehydrogenase (ndh) family"/>
</dbReference>
<dbReference type="EnsemblBacteria" id="BAD69920">
    <property type="protein sequence ID" value="BAD69920"/>
    <property type="gene ID" value="BAD69920"/>
</dbReference>
<dbReference type="GeneID" id="3169623"/>
<dbReference type="KEGG" id="ttj:TTHA0097"/>
<dbReference type="PATRIC" id="fig|300852.9.peg.95"/>
<dbReference type="eggNOG" id="COG1007">
    <property type="taxonomic scope" value="Bacteria"/>
</dbReference>
<dbReference type="HOGENOM" id="CLU_007100_1_5_0"/>
<dbReference type="PhylomeDB" id="Q56229"/>
<dbReference type="EvolutionaryTrace" id="Q56229"/>
<dbReference type="Proteomes" id="UP000000532">
    <property type="component" value="Chromosome"/>
</dbReference>
<dbReference type="GO" id="GO:0005886">
    <property type="term" value="C:plasma membrane"/>
    <property type="evidence" value="ECO:0007669"/>
    <property type="project" value="UniProtKB-SubCell"/>
</dbReference>
<dbReference type="GO" id="GO:0008137">
    <property type="term" value="F:NADH dehydrogenase (ubiquinone) activity"/>
    <property type="evidence" value="ECO:0007669"/>
    <property type="project" value="InterPro"/>
</dbReference>
<dbReference type="GO" id="GO:0050136">
    <property type="term" value="F:NADH:ubiquinone reductase (non-electrogenic) activity"/>
    <property type="evidence" value="ECO:0007669"/>
    <property type="project" value="UniProtKB-UniRule"/>
</dbReference>
<dbReference type="GO" id="GO:0048038">
    <property type="term" value="F:quinone binding"/>
    <property type="evidence" value="ECO:0007669"/>
    <property type="project" value="UniProtKB-KW"/>
</dbReference>
<dbReference type="GO" id="GO:0042773">
    <property type="term" value="P:ATP synthesis coupled electron transport"/>
    <property type="evidence" value="ECO:0007669"/>
    <property type="project" value="InterPro"/>
</dbReference>
<dbReference type="HAMAP" id="MF_00445">
    <property type="entry name" value="NDH1_NuoN_1"/>
    <property type="match status" value="1"/>
</dbReference>
<dbReference type="InterPro" id="IPR010096">
    <property type="entry name" value="NADH-Q_OxRdtase_suN/2"/>
</dbReference>
<dbReference type="InterPro" id="IPR001750">
    <property type="entry name" value="ND/Mrp_TM"/>
</dbReference>
<dbReference type="PANTHER" id="PTHR22773">
    <property type="entry name" value="NADH DEHYDROGENASE"/>
    <property type="match status" value="1"/>
</dbReference>
<dbReference type="Pfam" id="PF00361">
    <property type="entry name" value="Proton_antipo_M"/>
    <property type="match status" value="1"/>
</dbReference>
<protein>
    <recommendedName>
        <fullName>NADH-quinone oxidoreductase subunit 14</fullName>
        <ecNumber evidence="1">7.1.1.-</ecNumber>
    </recommendedName>
    <alternativeName>
        <fullName>NADH dehydrogenase I chain 14</fullName>
    </alternativeName>
    <alternativeName>
        <fullName>NDH-1 subunit 14</fullName>
    </alternativeName>
</protein>
<feature type="chain" id="PRO_0000117687" description="NADH-quinone oxidoreductase subunit 14">
    <location>
        <begin position="1"/>
        <end position="427"/>
    </location>
</feature>
<feature type="transmembrane region" description="Helical" evidence="1">
    <location>
        <begin position="1"/>
        <end position="21"/>
    </location>
</feature>
<feature type="transmembrane region" description="Helical" evidence="1">
    <location>
        <begin position="30"/>
        <end position="50"/>
    </location>
</feature>
<feature type="transmembrane region" description="Helical" evidence="1">
    <location>
        <begin position="57"/>
        <end position="77"/>
    </location>
</feature>
<feature type="transmembrane region" description="Helical" evidence="1">
    <location>
        <begin position="79"/>
        <end position="99"/>
    </location>
</feature>
<feature type="transmembrane region" description="Helical" evidence="1">
    <location>
        <begin position="104"/>
        <end position="124"/>
    </location>
</feature>
<feature type="transmembrane region" description="Helical" evidence="1">
    <location>
        <begin position="137"/>
        <end position="157"/>
    </location>
</feature>
<feature type="transmembrane region" description="Helical" evidence="1">
    <location>
        <begin position="172"/>
        <end position="192"/>
    </location>
</feature>
<feature type="transmembrane region" description="Helical" evidence="1">
    <location>
        <begin position="204"/>
        <end position="224"/>
    </location>
</feature>
<feature type="transmembrane region" description="Helical" evidence="1">
    <location>
        <begin position="230"/>
        <end position="250"/>
    </location>
</feature>
<feature type="transmembrane region" description="Helical" evidence="1">
    <location>
        <begin position="257"/>
        <end position="277"/>
    </location>
</feature>
<feature type="transmembrane region" description="Helical" evidence="1">
    <location>
        <begin position="280"/>
        <end position="300"/>
    </location>
</feature>
<feature type="transmembrane region" description="Helical" evidence="1">
    <location>
        <begin position="322"/>
        <end position="342"/>
    </location>
</feature>
<feature type="transmembrane region" description="Helical" evidence="1">
    <location>
        <begin position="360"/>
        <end position="380"/>
    </location>
</feature>
<feature type="transmembrane region" description="Helical" evidence="1">
    <location>
        <begin position="400"/>
        <end position="420"/>
    </location>
</feature>
<feature type="sequence conflict" description="In Ref. 1; AAA97951." evidence="2" ref="1">
    <original>R</original>
    <variation>G</variation>
    <location>
        <position position="81"/>
    </location>
</feature>
<feature type="sequence conflict" description="In Ref. 1; AAA97951." evidence="2" ref="1">
    <original>A</original>
    <variation>D</variation>
    <location>
        <position position="157"/>
    </location>
</feature>
<feature type="sequence conflict" description="In Ref. 1; AAA97951." evidence="2" ref="1">
    <original>L</original>
    <variation>V</variation>
    <location>
        <position position="233"/>
    </location>
</feature>
<feature type="sequence conflict" description="In Ref. 1; AAA97951." evidence="2" ref="1">
    <original>VLLLALGLLPGLVLPALAAGG</original>
    <variation>SSSSPWGSSPASSSPPWPRGVKITP</variation>
    <location>
        <begin position="407"/>
        <end position="427"/>
    </location>
</feature>
<feature type="helix" evidence="3">
    <location>
        <begin position="2"/>
        <end position="16"/>
    </location>
</feature>
<feature type="turn" evidence="3">
    <location>
        <begin position="17"/>
        <end position="19"/>
    </location>
</feature>
<feature type="helix" evidence="3">
    <location>
        <begin position="22"/>
        <end position="42"/>
    </location>
</feature>
<feature type="turn" evidence="3">
    <location>
        <begin position="43"/>
        <end position="45"/>
    </location>
</feature>
<feature type="strand" evidence="3">
    <location>
        <begin position="48"/>
        <end position="56"/>
    </location>
</feature>
<feature type="helix" evidence="3">
    <location>
        <begin position="57"/>
        <end position="76"/>
    </location>
</feature>
<feature type="helix" evidence="3">
    <location>
        <begin position="83"/>
        <end position="99"/>
    </location>
</feature>
<feature type="helix" evidence="3">
    <location>
        <begin position="104"/>
        <end position="121"/>
    </location>
</feature>
<feature type="helix" evidence="3">
    <location>
        <begin position="127"/>
        <end position="157"/>
    </location>
</feature>
<feature type="helix" evidence="3">
    <location>
        <begin position="170"/>
        <end position="186"/>
    </location>
</feature>
<feature type="helix" evidence="3">
    <location>
        <begin position="195"/>
        <end position="202"/>
    </location>
</feature>
<feature type="helix" evidence="3">
    <location>
        <begin position="205"/>
        <end position="224"/>
    </location>
</feature>
<feature type="helix" evidence="3">
    <location>
        <begin position="230"/>
        <end position="249"/>
    </location>
</feature>
<feature type="helix" evidence="3">
    <location>
        <begin position="254"/>
        <end position="269"/>
    </location>
</feature>
<feature type="turn" evidence="3">
    <location>
        <begin position="270"/>
        <end position="276"/>
    </location>
</feature>
<feature type="helix" evidence="3">
    <location>
        <begin position="279"/>
        <end position="302"/>
    </location>
</feature>
<feature type="helix" evidence="3">
    <location>
        <begin position="309"/>
        <end position="312"/>
    </location>
</feature>
<feature type="helix" evidence="3">
    <location>
        <begin position="315"/>
        <end position="318"/>
    </location>
</feature>
<feature type="helix" evidence="3">
    <location>
        <begin position="320"/>
        <end position="334"/>
    </location>
</feature>
<feature type="helix" evidence="3">
    <location>
        <begin position="340"/>
        <end position="354"/>
    </location>
</feature>
<feature type="helix" evidence="3">
    <location>
        <begin position="359"/>
        <end position="379"/>
    </location>
</feature>
<feature type="helix" evidence="3">
    <location>
        <begin position="380"/>
        <end position="383"/>
    </location>
</feature>
<feature type="helix" evidence="3">
    <location>
        <begin position="396"/>
        <end position="414"/>
    </location>
</feature>
<feature type="turn" evidence="3">
    <location>
        <begin position="416"/>
        <end position="419"/>
    </location>
</feature>
<feature type="helix" evidence="3">
    <location>
        <begin position="420"/>
        <end position="422"/>
    </location>
</feature>
<feature type="strand" evidence="3">
    <location>
        <begin position="423"/>
        <end position="425"/>
    </location>
</feature>
<evidence type="ECO:0000255" key="1">
    <source>
        <dbReference type="HAMAP-Rule" id="MF_00445"/>
    </source>
</evidence>
<evidence type="ECO:0000305" key="2"/>
<evidence type="ECO:0007829" key="3">
    <source>
        <dbReference type="PDB" id="6Y11"/>
    </source>
</evidence>